<evidence type="ECO:0000269" key="1">
    <source>
    </source>
</evidence>
<evidence type="ECO:0000269" key="2">
    <source>
    </source>
</evidence>
<evidence type="ECO:0000269" key="3">
    <source>
    </source>
</evidence>
<evidence type="ECO:0000269" key="4">
    <source>
    </source>
</evidence>
<evidence type="ECO:0000305" key="5"/>
<evidence type="ECO:0007829" key="6">
    <source>
        <dbReference type="PDB" id="1XB4"/>
    </source>
</evidence>
<protein>
    <recommendedName>
        <fullName>Vacuolar protein-sorting-associated protein 25</fullName>
    </recommendedName>
    <alternativeName>
        <fullName>ESCRT-II complex subunit VPS25</fullName>
    </alternativeName>
</protein>
<sequence length="202" mass="23558">MSALPPVYSFPPLYTRQPNSLTRRQQISTWIDIISQYCKTKKIWYMSVDGTVINDNELDSGSTDNDDSKKISKNLFNNEDIQRSVSQVFIDEIWSQMTKEGKCLPIDQSGRRSSNTTTTRYFILWKSLDSWASLILQWFEDSGKLNQVITLYELSEGDETVNWEFHRMPESLLYYCLKPLCDRNRATMLKDENDKVIAIKVV</sequence>
<reference key="1">
    <citation type="journal article" date="1996" name="EMBO J.">
        <title>Complete nucleotide sequence of Saccharomyces cerevisiae chromosome X.</title>
        <authorList>
            <person name="Galibert F."/>
            <person name="Alexandraki D."/>
            <person name="Baur A."/>
            <person name="Boles E."/>
            <person name="Chalwatzis N."/>
            <person name="Chuat J.-C."/>
            <person name="Coster F."/>
            <person name="Cziepluch C."/>
            <person name="de Haan M."/>
            <person name="Domdey H."/>
            <person name="Durand P."/>
            <person name="Entian K.-D."/>
            <person name="Gatius M."/>
            <person name="Goffeau A."/>
            <person name="Grivell L.A."/>
            <person name="Hennemann A."/>
            <person name="Herbert C.J."/>
            <person name="Heumann K."/>
            <person name="Hilger F."/>
            <person name="Hollenberg C.P."/>
            <person name="Huang M.-E."/>
            <person name="Jacq C."/>
            <person name="Jauniaux J.-C."/>
            <person name="Katsoulou C."/>
            <person name="Kirchrath L."/>
            <person name="Kleine K."/>
            <person name="Kordes E."/>
            <person name="Koetter P."/>
            <person name="Liebl S."/>
            <person name="Louis E.J."/>
            <person name="Manus V."/>
            <person name="Mewes H.-W."/>
            <person name="Miosga T."/>
            <person name="Obermaier B."/>
            <person name="Perea J."/>
            <person name="Pohl T.M."/>
            <person name="Portetelle D."/>
            <person name="Pujol A."/>
            <person name="Purnelle B."/>
            <person name="Ramezani Rad M."/>
            <person name="Rasmussen S.W."/>
            <person name="Rose M."/>
            <person name="Rossau R."/>
            <person name="Schaaff-Gerstenschlaeger I."/>
            <person name="Smits P.H.M."/>
            <person name="Scarcez T."/>
            <person name="Soriano N."/>
            <person name="To Van D."/>
            <person name="Tzermia M."/>
            <person name="Van Broekhoven A."/>
            <person name="Vandenbol M."/>
            <person name="Wedler H."/>
            <person name="von Wettstein D."/>
            <person name="Wambutt R."/>
            <person name="Zagulski M."/>
            <person name="Zollner A."/>
            <person name="Karpfinger-Hartl L."/>
        </authorList>
    </citation>
    <scope>NUCLEOTIDE SEQUENCE [LARGE SCALE GENOMIC DNA]</scope>
    <source>
        <strain>ATCC 204508 / S288c</strain>
    </source>
</reference>
<reference key="2">
    <citation type="journal article" date="2014" name="G3 (Bethesda)">
        <title>The reference genome sequence of Saccharomyces cerevisiae: Then and now.</title>
        <authorList>
            <person name="Engel S.R."/>
            <person name="Dietrich F.S."/>
            <person name="Fisk D.G."/>
            <person name="Binkley G."/>
            <person name="Balakrishnan R."/>
            <person name="Costanzo M.C."/>
            <person name="Dwight S.S."/>
            <person name="Hitz B.C."/>
            <person name="Karra K."/>
            <person name="Nash R.S."/>
            <person name="Weng S."/>
            <person name="Wong E.D."/>
            <person name="Lloyd P."/>
            <person name="Skrzypek M.S."/>
            <person name="Miyasato S.R."/>
            <person name="Simison M."/>
            <person name="Cherry J.M."/>
        </authorList>
    </citation>
    <scope>GENOME REANNOTATION</scope>
    <source>
        <strain>ATCC 204508 / S288c</strain>
    </source>
</reference>
<reference key="3">
    <citation type="journal article" date="2002" name="Dev. Cell">
        <title>Endosome-associated complex, ESCRT-II, recruits transport machinery for protein sorting at the multivesicular body.</title>
        <authorList>
            <person name="Babst M."/>
            <person name="Katzmann D.J."/>
            <person name="Snyder W.B."/>
            <person name="Wendland B."/>
            <person name="Emr S.D."/>
        </authorList>
    </citation>
    <scope>FUNCTION</scope>
    <scope>SUBUNIT</scope>
    <scope>SUBCELLULAR LOCATION</scope>
</reference>
<reference key="4">
    <citation type="journal article" date="2004" name="BMC Struct. Biol.">
        <title>Crystal structure of subunit VPS25 of the endosomal trafficking complex ESCRT-II.</title>
        <authorList>
            <person name="Wernimont A.K."/>
            <person name="Weissenhorn W."/>
        </authorList>
    </citation>
    <scope>X-RAY CRYSTALLOGRAPHY (3.1 ANGSTROMS)</scope>
    <scope>SUBUNIT</scope>
</reference>
<reference key="5">
    <citation type="journal article" date="2004" name="Dev. Cell">
        <title>ESCRT-II, an endosome-associated complex required for protein sorting: crystal structure and interactions with ESCRT-III and membranes.</title>
        <authorList>
            <person name="Teo H."/>
            <person name="Perisic O."/>
            <person name="Gonzalez B."/>
            <person name="Williams R.L."/>
        </authorList>
    </citation>
    <scope>X-RAY CRYSTALLOGRAPHY (3.6 ANGSTROMS) IN COMPLEX WITH SNF8 AND VPS36</scope>
</reference>
<reference key="6">
    <citation type="journal article" date="2004" name="Nature">
        <title>Structure of the ESCRT-II endosomal trafficking complex.</title>
        <authorList>
            <person name="Hierro A."/>
            <person name="Sun J."/>
            <person name="Rusnak A.S."/>
            <person name="Kim J."/>
            <person name="Prag G."/>
            <person name="Emr S.D."/>
            <person name="Hurley J.H."/>
        </authorList>
    </citation>
    <scope>X-RAY CRYSTALLOGRAPHY (3.6 ANGSTROMS) IN COMPLEX WITH SNF8 AND VPS36</scope>
</reference>
<organism>
    <name type="scientific">Saccharomyces cerevisiae (strain ATCC 204508 / S288c)</name>
    <name type="common">Baker's yeast</name>
    <dbReference type="NCBI Taxonomy" id="559292"/>
    <lineage>
        <taxon>Eukaryota</taxon>
        <taxon>Fungi</taxon>
        <taxon>Dikarya</taxon>
        <taxon>Ascomycota</taxon>
        <taxon>Saccharomycotina</taxon>
        <taxon>Saccharomycetes</taxon>
        <taxon>Saccharomycetales</taxon>
        <taxon>Saccharomycetaceae</taxon>
        <taxon>Saccharomyces</taxon>
    </lineage>
</organism>
<proteinExistence type="evidence at protein level"/>
<name>VPS25_YEAST</name>
<gene>
    <name type="primary">VPS25</name>
    <name type="synonym">VPT25</name>
    <name type="ordered locus">YJR102C</name>
    <name type="ORF">J1957</name>
</gene>
<feature type="chain" id="PRO_0000215221" description="Vacuolar protein-sorting-associated protein 25">
    <location>
        <begin position="1"/>
        <end position="202"/>
    </location>
</feature>
<feature type="helix" evidence="6">
    <location>
        <begin position="7"/>
        <end position="9"/>
    </location>
</feature>
<feature type="helix" evidence="6">
    <location>
        <begin position="11"/>
        <end position="13"/>
    </location>
</feature>
<feature type="helix" evidence="6">
    <location>
        <begin position="20"/>
        <end position="40"/>
    </location>
</feature>
<feature type="strand" evidence="6">
    <location>
        <begin position="45"/>
        <end position="47"/>
    </location>
</feature>
<feature type="strand" evidence="6">
    <location>
        <begin position="50"/>
        <end position="52"/>
    </location>
</feature>
<feature type="turn" evidence="6">
    <location>
        <begin position="79"/>
        <end position="82"/>
    </location>
</feature>
<feature type="helix" evidence="6">
    <location>
        <begin position="87"/>
        <end position="99"/>
    </location>
</feature>
<feature type="strand" evidence="6">
    <location>
        <begin position="102"/>
        <end position="111"/>
    </location>
</feature>
<feature type="strand" evidence="6">
    <location>
        <begin position="120"/>
        <end position="123"/>
    </location>
</feature>
<feature type="helix" evidence="6">
    <location>
        <begin position="128"/>
        <end position="140"/>
    </location>
</feature>
<feature type="helix" evidence="6">
    <location>
        <begin position="151"/>
        <end position="154"/>
    </location>
</feature>
<feature type="turn" evidence="6">
    <location>
        <begin position="164"/>
        <end position="167"/>
    </location>
</feature>
<feature type="helix" evidence="6">
    <location>
        <begin position="170"/>
        <end position="181"/>
    </location>
</feature>
<feature type="helix" evidence="6">
    <location>
        <begin position="182"/>
        <end position="184"/>
    </location>
</feature>
<feature type="strand" evidence="6">
    <location>
        <begin position="187"/>
        <end position="190"/>
    </location>
</feature>
<feature type="strand" evidence="6">
    <location>
        <begin position="196"/>
        <end position="200"/>
    </location>
</feature>
<dbReference type="EMBL" id="Z49602">
    <property type="protein sequence ID" value="CAA89632.1"/>
    <property type="molecule type" value="Genomic_DNA"/>
</dbReference>
<dbReference type="EMBL" id="BK006943">
    <property type="protein sequence ID" value="DAA08887.1"/>
    <property type="molecule type" value="Genomic_DNA"/>
</dbReference>
<dbReference type="PIR" id="S57123">
    <property type="entry name" value="S57123"/>
</dbReference>
<dbReference type="RefSeq" id="NP_012636.1">
    <property type="nucleotide sequence ID" value="NM_001181760.1"/>
</dbReference>
<dbReference type="PDB" id="1U5T">
    <property type="method" value="X-ray"/>
    <property type="resolution" value="3.60 A"/>
    <property type="chains" value="C/D=1-202"/>
</dbReference>
<dbReference type="PDB" id="1W7P">
    <property type="method" value="X-ray"/>
    <property type="resolution" value="3.60 A"/>
    <property type="chains" value="B/C=1-202"/>
</dbReference>
<dbReference type="PDB" id="1XB4">
    <property type="method" value="X-ray"/>
    <property type="resolution" value="3.10 A"/>
    <property type="chains" value="A/B/C/D=1-202"/>
</dbReference>
<dbReference type="PDBsum" id="1U5T"/>
<dbReference type="PDBsum" id="1W7P"/>
<dbReference type="PDBsum" id="1XB4"/>
<dbReference type="SMR" id="P47142"/>
<dbReference type="BioGRID" id="33858">
    <property type="interactions" value="117"/>
</dbReference>
<dbReference type="ComplexPortal" id="CPX-1623">
    <property type="entry name" value="ESCRT-II complex"/>
</dbReference>
<dbReference type="DIP" id="DIP-4446N"/>
<dbReference type="FunCoup" id="P47142">
    <property type="interactions" value="996"/>
</dbReference>
<dbReference type="IntAct" id="P47142">
    <property type="interactions" value="8"/>
</dbReference>
<dbReference type="MINT" id="P47142"/>
<dbReference type="STRING" id="4932.YJR102C"/>
<dbReference type="TCDB" id="3.A.31.1.1">
    <property type="family name" value="the endosomal sorting complexes required for transport iii (escrt-iii) family"/>
</dbReference>
<dbReference type="PaxDb" id="4932-YJR102C"/>
<dbReference type="PeptideAtlas" id="P47142"/>
<dbReference type="EnsemblFungi" id="YJR102C_mRNA">
    <property type="protein sequence ID" value="YJR102C"/>
    <property type="gene ID" value="YJR102C"/>
</dbReference>
<dbReference type="GeneID" id="853566"/>
<dbReference type="KEGG" id="sce:YJR102C"/>
<dbReference type="AGR" id="SGD:S000003863"/>
<dbReference type="SGD" id="S000003863">
    <property type="gene designation" value="VPS25"/>
</dbReference>
<dbReference type="VEuPathDB" id="FungiDB:YJR102C"/>
<dbReference type="eggNOG" id="KOG4068">
    <property type="taxonomic scope" value="Eukaryota"/>
</dbReference>
<dbReference type="GeneTree" id="ENSGT00390000014892"/>
<dbReference type="HOGENOM" id="CLU_087657_1_1_1"/>
<dbReference type="InParanoid" id="P47142"/>
<dbReference type="OMA" id="TRCLIMW"/>
<dbReference type="OrthoDB" id="245150at2759"/>
<dbReference type="BioCyc" id="YEAST:G3O-31730-MONOMER"/>
<dbReference type="Reactome" id="R-SCE-917729">
    <property type="pathway name" value="Endosomal Sorting Complex Required For Transport (ESCRT)"/>
</dbReference>
<dbReference type="BioGRID-ORCS" id="853566">
    <property type="hits" value="0 hits in 10 CRISPR screens"/>
</dbReference>
<dbReference type="EvolutionaryTrace" id="P47142"/>
<dbReference type="PRO" id="PR:P47142"/>
<dbReference type="Proteomes" id="UP000002311">
    <property type="component" value="Chromosome X"/>
</dbReference>
<dbReference type="RNAct" id="P47142">
    <property type="molecule type" value="protein"/>
</dbReference>
<dbReference type="GO" id="GO:0005829">
    <property type="term" value="C:cytosol"/>
    <property type="evidence" value="ECO:0007005"/>
    <property type="project" value="SGD"/>
</dbReference>
<dbReference type="GO" id="GO:0000814">
    <property type="term" value="C:ESCRT II complex"/>
    <property type="evidence" value="ECO:0000314"/>
    <property type="project" value="SGD"/>
</dbReference>
<dbReference type="GO" id="GO:0042803">
    <property type="term" value="F:protein homodimerization activity"/>
    <property type="evidence" value="ECO:0000318"/>
    <property type="project" value="GO_Central"/>
</dbReference>
<dbReference type="GO" id="GO:0005198">
    <property type="term" value="F:structural molecule activity"/>
    <property type="evidence" value="ECO:0000314"/>
    <property type="project" value="SGD"/>
</dbReference>
<dbReference type="GO" id="GO:1904669">
    <property type="term" value="P:ATP export"/>
    <property type="evidence" value="ECO:0000315"/>
    <property type="project" value="SGD"/>
</dbReference>
<dbReference type="GO" id="GO:0000122">
    <property type="term" value="P:negative regulation of transcription by RNA polymerase II"/>
    <property type="evidence" value="ECO:0000315"/>
    <property type="project" value="SGD"/>
</dbReference>
<dbReference type="GO" id="GO:0006623">
    <property type="term" value="P:protein targeting to vacuole"/>
    <property type="evidence" value="ECO:0000315"/>
    <property type="project" value="SGD"/>
</dbReference>
<dbReference type="GO" id="GO:0043328">
    <property type="term" value="P:protein transport to vacuole involved in ubiquitin-dependent protein catabolic process via the multivesicular body sorting pathway"/>
    <property type="evidence" value="ECO:0000318"/>
    <property type="project" value="GO_Central"/>
</dbReference>
<dbReference type="GO" id="GO:0043162">
    <property type="term" value="P:ubiquitin-dependent protein catabolic process via the multivesicular body sorting pathway"/>
    <property type="evidence" value="ECO:0000314"/>
    <property type="project" value="ComplexPortal"/>
</dbReference>
<dbReference type="DisProt" id="DP01599"/>
<dbReference type="FunFam" id="1.10.10.10:FF:000792">
    <property type="entry name" value="Vacuolar protein-sorting-associated protein 25"/>
    <property type="match status" value="1"/>
</dbReference>
<dbReference type="Gene3D" id="1.10.10.570">
    <property type="entry name" value="Winged helix' DNA-binding domain. Chain C. Domain 1"/>
    <property type="match status" value="1"/>
</dbReference>
<dbReference type="Gene3D" id="1.10.10.10">
    <property type="entry name" value="Winged helix-like DNA-binding domain superfamily/Winged helix DNA-binding domain"/>
    <property type="match status" value="1"/>
</dbReference>
<dbReference type="InterPro" id="IPR008570">
    <property type="entry name" value="ESCRT-II_cplx_Vps25-sub"/>
</dbReference>
<dbReference type="InterPro" id="IPR014041">
    <property type="entry name" value="ESCRT-II_cplx_Vps25-sub_N"/>
</dbReference>
<dbReference type="InterPro" id="IPR036388">
    <property type="entry name" value="WH-like_DNA-bd_sf"/>
</dbReference>
<dbReference type="InterPro" id="IPR036390">
    <property type="entry name" value="WH_DNA-bd_sf"/>
</dbReference>
<dbReference type="PANTHER" id="PTHR13149">
    <property type="entry name" value="VACUOLAR PROTEIN SORTING-ASSOCIATED PROTEIN VPS25"/>
    <property type="match status" value="1"/>
</dbReference>
<dbReference type="PANTHER" id="PTHR13149:SF0">
    <property type="entry name" value="VACUOLAR PROTEIN-SORTING-ASSOCIATED PROTEIN 25"/>
    <property type="match status" value="1"/>
</dbReference>
<dbReference type="Pfam" id="PF05871">
    <property type="entry name" value="ESCRT-II"/>
    <property type="match status" value="1"/>
</dbReference>
<dbReference type="SUPFAM" id="SSF46785">
    <property type="entry name" value="Winged helix' DNA-binding domain"/>
    <property type="match status" value="2"/>
</dbReference>
<comment type="function">
    <text evidence="1">Component of the ESCRT-II complex (endosomal sorting complex required for transport II), which is required for multivesicular body (MVB) formation and sorting of endosomal cargo proteins into MVBs. The MVB pathway mediates delivery of transmembrane proteins into the lumen of the lysosome for degradation. The ESCRT-II complex is probably involved in the recruitment of the ESCRT-III complex.</text>
</comment>
<comment type="subunit">
    <text evidence="1 2 3 4">Homodimer. Component of the endosomal sorting complex required for transport II (ESCRT-II), which consists of 2 copies of VPS25, 1 copy of SNF8, and 1 copy of VPS36. The ESCRT-II complex interacts directly with the VPS20 subunit of the ESCRT-III complex.</text>
</comment>
<comment type="interaction">
    <interactant intactId="EBI-25595">
        <id>P47142</id>
    </interactant>
    <interactant intactId="EBI-30277">
        <id>Q12483</id>
        <label>SNF8</label>
    </interactant>
    <organismsDiffer>false</organismsDiffer>
    <experiments>7</experiments>
</comment>
<comment type="interaction">
    <interactant intactId="EBI-25595">
        <id>P47142</id>
    </interactant>
    <interactant intactId="EBI-28157">
        <id>Q04272</id>
        <label>VPS20</label>
    </interactant>
    <organismsDiffer>false</organismsDiffer>
    <experiments>2</experiments>
</comment>
<comment type="interaction">
    <interactant intactId="EBI-25595">
        <id>P47142</id>
    </interactant>
    <interactant intactId="EBI-36540">
        <id>Q06696</id>
        <label>VPS36</label>
    </interactant>
    <organismsDiffer>false</organismsDiffer>
    <experiments>4</experiments>
</comment>
<comment type="subcellular location">
    <subcellularLocation>
        <location evidence="1">Cytoplasm</location>
    </subcellularLocation>
    <subcellularLocation>
        <location evidence="1">Endosome membrane</location>
        <topology evidence="1">Peripheral membrane protein</topology>
    </subcellularLocation>
</comment>
<comment type="similarity">
    <text evidence="5">Belongs to the VPS25 family.</text>
</comment>
<keyword id="KW-0002">3D-structure</keyword>
<keyword id="KW-0963">Cytoplasm</keyword>
<keyword id="KW-0967">Endosome</keyword>
<keyword id="KW-0472">Membrane</keyword>
<keyword id="KW-0653">Protein transport</keyword>
<keyword id="KW-1185">Reference proteome</keyword>
<keyword id="KW-0813">Transport</keyword>
<accession>P47142</accession>
<accession>D6VWS1</accession>